<proteinExistence type="evidence at transcript level"/>
<reference key="1">
    <citation type="journal article" date="1997" name="Plant Mol. Biol.">
        <title>Knotted1-like homeobox genes are expressed during apple tree (Malus domestica [L.] Borkh) growth and development.</title>
        <authorList>
            <person name="Watillon B."/>
            <person name="Kettmann R."/>
            <person name="Boxus P."/>
            <person name="Burny A."/>
        </authorList>
    </citation>
    <scope>NUCLEOTIDE SEQUENCE [MRNA]</scope>
    <source>
        <strain>cv. Wijcik</strain>
    </source>
</reference>
<feature type="chain" id="PRO_0000048977" description="Homeobox protein knotted-1-like 3">
    <location>
        <begin position="1"/>
        <end position="427"/>
    </location>
</feature>
<feature type="domain" description="ELK" evidence="2">
    <location>
        <begin position="330"/>
        <end position="350"/>
    </location>
</feature>
<feature type="DNA-binding region" description="Homeobox; TALE-type" evidence="1">
    <location>
        <begin position="351"/>
        <end position="414"/>
    </location>
</feature>
<feature type="region of interest" description="Disordered" evidence="3">
    <location>
        <begin position="19"/>
        <end position="49"/>
    </location>
</feature>
<feature type="region of interest" description="Disordered" evidence="3">
    <location>
        <begin position="272"/>
        <end position="291"/>
    </location>
</feature>
<feature type="compositionally biased region" description="Polar residues" evidence="3">
    <location>
        <begin position="272"/>
        <end position="284"/>
    </location>
</feature>
<keyword id="KW-0238">DNA-binding</keyword>
<keyword id="KW-0371">Homeobox</keyword>
<keyword id="KW-0539">Nucleus</keyword>
<comment type="subcellular location">
    <subcellularLocation>
        <location evidence="4">Nucleus</location>
    </subcellularLocation>
</comment>
<comment type="tissue specificity">
    <text>Maximally expressed in sepals, petals and fully expanded leaves. Also expressed in other flower organs and in developing leaves. Low level expression in stem internodes.</text>
</comment>
<comment type="similarity">
    <text evidence="2">Belongs to the TALE/KNOX homeobox family.</text>
</comment>
<protein>
    <recommendedName>
        <fullName>Homeobox protein knotted-1-like 3</fullName>
    </recommendedName>
    <alternativeName>
        <fullName>KNAP3</fullName>
    </alternativeName>
</protein>
<organism>
    <name type="scientific">Malus domestica</name>
    <name type="common">Apple</name>
    <name type="synonym">Pyrus malus</name>
    <dbReference type="NCBI Taxonomy" id="3750"/>
    <lineage>
        <taxon>Eukaryota</taxon>
        <taxon>Viridiplantae</taxon>
        <taxon>Streptophyta</taxon>
        <taxon>Embryophyta</taxon>
        <taxon>Tracheophyta</taxon>
        <taxon>Spermatophyta</taxon>
        <taxon>Magnoliopsida</taxon>
        <taxon>eudicotyledons</taxon>
        <taxon>Gunneridae</taxon>
        <taxon>Pentapetalae</taxon>
        <taxon>rosids</taxon>
        <taxon>fabids</taxon>
        <taxon>Rosales</taxon>
        <taxon>Rosaceae</taxon>
        <taxon>Amygdaloideae</taxon>
        <taxon>Maleae</taxon>
        <taxon>Malus</taxon>
    </lineage>
</organism>
<sequence>MAYHNHLSQDLPLHHFTDQTHHQHQQYQSDQPDPNSKPPEPHHSFQPAPNWLNSALLRNFTNTDTNPTNSNNANNNGGGVSNFLNLHVTASDSAASQASNQWLSQSHRPILHRNHSDVNDDVTVAGDSMIAAALSHDSADLKPDSILNKNEGGGGDGGVMNWQNARHKAEILAHPLYEPLLSAHVACLRIATPVDQLPRIDAQLAQSQNVVAKYSALGNGMVGDDKELDQFMRNYVLLLCSFKEQLQQHVRVHAMEAVMACWEIEQSLQSLTGVSPGEGTSATMSDDEDDQVDSDANLFDEGMEGHDSMGFGPLIPTESERSLMERVRQELKHELKQGYKEKIVDIREEILRKRRAGKLPGDTTSVLKAWWQSHSKWPYPTEEDKARLVQETGLQLKQINNWFINQRKRNWHSNPSTSTVLKSKRKR</sequence>
<evidence type="ECO:0000255" key="1">
    <source>
        <dbReference type="PROSITE-ProRule" id="PRU00108"/>
    </source>
</evidence>
<evidence type="ECO:0000255" key="2">
    <source>
        <dbReference type="PROSITE-ProRule" id="PRU00559"/>
    </source>
</evidence>
<evidence type="ECO:0000256" key="3">
    <source>
        <dbReference type="SAM" id="MobiDB-lite"/>
    </source>
</evidence>
<evidence type="ECO:0000305" key="4"/>
<accession>O04136</accession>
<name>KNAP3_MALDO</name>
<dbReference type="EMBL" id="Z71980">
    <property type="protein sequence ID" value="CAA96512.1"/>
    <property type="molecule type" value="mRNA"/>
</dbReference>
<dbReference type="PIR" id="T17010">
    <property type="entry name" value="T17010"/>
</dbReference>
<dbReference type="SMR" id="O04136"/>
<dbReference type="GO" id="GO:0005634">
    <property type="term" value="C:nucleus"/>
    <property type="evidence" value="ECO:0007669"/>
    <property type="project" value="UniProtKB-SubCell"/>
</dbReference>
<dbReference type="GO" id="GO:0003677">
    <property type="term" value="F:DNA binding"/>
    <property type="evidence" value="ECO:0007669"/>
    <property type="project" value="UniProtKB-KW"/>
</dbReference>
<dbReference type="GO" id="GO:0006355">
    <property type="term" value="P:regulation of DNA-templated transcription"/>
    <property type="evidence" value="ECO:0007669"/>
    <property type="project" value="InterPro"/>
</dbReference>
<dbReference type="CDD" id="cd00086">
    <property type="entry name" value="homeodomain"/>
    <property type="match status" value="1"/>
</dbReference>
<dbReference type="FunFam" id="1.10.10.60:FF:000143">
    <property type="entry name" value="homeobox protein knotted-1-like 3 isoform X1"/>
    <property type="match status" value="1"/>
</dbReference>
<dbReference type="Gene3D" id="1.10.10.60">
    <property type="entry name" value="Homeodomain-like"/>
    <property type="match status" value="1"/>
</dbReference>
<dbReference type="InterPro" id="IPR005539">
    <property type="entry name" value="ELK_dom"/>
</dbReference>
<dbReference type="InterPro" id="IPR001356">
    <property type="entry name" value="HD"/>
</dbReference>
<dbReference type="InterPro" id="IPR009057">
    <property type="entry name" value="Homeodomain-like_sf"/>
</dbReference>
<dbReference type="InterPro" id="IPR008422">
    <property type="entry name" value="KN_HD"/>
</dbReference>
<dbReference type="InterPro" id="IPR005540">
    <property type="entry name" value="KNOX1"/>
</dbReference>
<dbReference type="InterPro" id="IPR005541">
    <property type="entry name" value="KNOX2"/>
</dbReference>
<dbReference type="InterPro" id="IPR050224">
    <property type="entry name" value="TALE_homeobox"/>
</dbReference>
<dbReference type="PANTHER" id="PTHR11850">
    <property type="entry name" value="HOMEOBOX PROTEIN TRANSCRIPTION FACTORS"/>
    <property type="match status" value="1"/>
</dbReference>
<dbReference type="Pfam" id="PF03789">
    <property type="entry name" value="ELK"/>
    <property type="match status" value="1"/>
</dbReference>
<dbReference type="Pfam" id="PF05920">
    <property type="entry name" value="Homeobox_KN"/>
    <property type="match status" value="1"/>
</dbReference>
<dbReference type="Pfam" id="PF03790">
    <property type="entry name" value="KNOX1"/>
    <property type="match status" value="1"/>
</dbReference>
<dbReference type="Pfam" id="PF03791">
    <property type="entry name" value="KNOX2"/>
    <property type="match status" value="1"/>
</dbReference>
<dbReference type="SMART" id="SM01188">
    <property type="entry name" value="ELK"/>
    <property type="match status" value="1"/>
</dbReference>
<dbReference type="SMART" id="SM00389">
    <property type="entry name" value="HOX"/>
    <property type="match status" value="1"/>
</dbReference>
<dbReference type="SMART" id="SM01255">
    <property type="entry name" value="KNOX1"/>
    <property type="match status" value="1"/>
</dbReference>
<dbReference type="SMART" id="SM01256">
    <property type="entry name" value="KNOX2"/>
    <property type="match status" value="1"/>
</dbReference>
<dbReference type="SUPFAM" id="SSF46689">
    <property type="entry name" value="Homeodomain-like"/>
    <property type="match status" value="1"/>
</dbReference>
<dbReference type="PROSITE" id="PS51213">
    <property type="entry name" value="ELK"/>
    <property type="match status" value="1"/>
</dbReference>
<dbReference type="PROSITE" id="PS00027">
    <property type="entry name" value="HOMEOBOX_1"/>
    <property type="match status" value="1"/>
</dbReference>
<dbReference type="PROSITE" id="PS50071">
    <property type="entry name" value="HOMEOBOX_2"/>
    <property type="match status" value="1"/>
</dbReference>